<proteinExistence type="inferred from homology"/>
<gene>
    <name evidence="1" type="primary">hemA</name>
    <name type="ordered locus">SeD_A1546</name>
</gene>
<sequence>MTLLALGINHKTAPVSLRERVTFSPDTLDQALDSLLAQPMVQGGVVLSTCNRTELYLSVEEQDNLQEALIRWLCDYHNLNEDDLRNSLYWHQDNDAVSHLMRVASGLDSLVLGEPQILGQVKKAFADSQKGHLNASALERMFQKSFSVAKRVRTETDIGASAVSVAFAACTLARQIFESLSTVTVLLVGAGETIELVARHLREHKVQKMIIANRTRERAQALTDEVGAEVISLSDIDARLQDADIIISSTASPLPIIGKGMVERALKSRRNQPMLLVDIAVPRDVEPEVGKLANAYLYSVDDLQSIISHNLAQRQAAAVEAETIVEQEASEFMAWLRAQGASETIREYRSQSEQIRDELTTKALSALQQGGDAQAILQDLAWKLTNRLIHAPTKSLQQAARDGDDERLNILRDSLGLE</sequence>
<evidence type="ECO:0000255" key="1">
    <source>
        <dbReference type="HAMAP-Rule" id="MF_00087"/>
    </source>
</evidence>
<accession>B5FU18</accession>
<dbReference type="EC" id="1.2.1.70" evidence="1"/>
<dbReference type="EMBL" id="CP001144">
    <property type="protein sequence ID" value="ACH74530.1"/>
    <property type="molecule type" value="Genomic_DNA"/>
</dbReference>
<dbReference type="RefSeq" id="WP_000173210.1">
    <property type="nucleotide sequence ID" value="NC_011205.1"/>
</dbReference>
<dbReference type="SMR" id="B5FU18"/>
<dbReference type="KEGG" id="sed:SeD_A1546"/>
<dbReference type="HOGENOM" id="CLU_035113_2_2_6"/>
<dbReference type="UniPathway" id="UPA00251">
    <property type="reaction ID" value="UER00316"/>
</dbReference>
<dbReference type="Proteomes" id="UP000008322">
    <property type="component" value="Chromosome"/>
</dbReference>
<dbReference type="GO" id="GO:0008883">
    <property type="term" value="F:glutamyl-tRNA reductase activity"/>
    <property type="evidence" value="ECO:0007669"/>
    <property type="project" value="UniProtKB-UniRule"/>
</dbReference>
<dbReference type="GO" id="GO:0050661">
    <property type="term" value="F:NADP binding"/>
    <property type="evidence" value="ECO:0007669"/>
    <property type="project" value="InterPro"/>
</dbReference>
<dbReference type="GO" id="GO:0019353">
    <property type="term" value="P:protoporphyrinogen IX biosynthetic process from glutamate"/>
    <property type="evidence" value="ECO:0007669"/>
    <property type="project" value="TreeGrafter"/>
</dbReference>
<dbReference type="CDD" id="cd05213">
    <property type="entry name" value="NAD_bind_Glutamyl_tRNA_reduct"/>
    <property type="match status" value="1"/>
</dbReference>
<dbReference type="FunFam" id="3.30.460.30:FF:000001">
    <property type="entry name" value="Glutamyl-tRNA reductase"/>
    <property type="match status" value="1"/>
</dbReference>
<dbReference type="FunFam" id="3.40.50.720:FF:000031">
    <property type="entry name" value="Glutamyl-tRNA reductase"/>
    <property type="match status" value="1"/>
</dbReference>
<dbReference type="Gene3D" id="3.30.460.30">
    <property type="entry name" value="Glutamyl-tRNA reductase, N-terminal domain"/>
    <property type="match status" value="1"/>
</dbReference>
<dbReference type="Gene3D" id="3.40.50.720">
    <property type="entry name" value="NAD(P)-binding Rossmann-like Domain"/>
    <property type="match status" value="1"/>
</dbReference>
<dbReference type="HAMAP" id="MF_00087">
    <property type="entry name" value="Glu_tRNA_reductase"/>
    <property type="match status" value="1"/>
</dbReference>
<dbReference type="InterPro" id="IPR000343">
    <property type="entry name" value="4pyrrol_synth_GluRdtase"/>
</dbReference>
<dbReference type="InterPro" id="IPR015896">
    <property type="entry name" value="4pyrrol_synth_GluRdtase_dimer"/>
</dbReference>
<dbReference type="InterPro" id="IPR015895">
    <property type="entry name" value="4pyrrol_synth_GluRdtase_N"/>
</dbReference>
<dbReference type="InterPro" id="IPR018214">
    <property type="entry name" value="GluRdtase_CS"/>
</dbReference>
<dbReference type="InterPro" id="IPR036453">
    <property type="entry name" value="GluRdtase_dimer_dom_sf"/>
</dbReference>
<dbReference type="InterPro" id="IPR036343">
    <property type="entry name" value="GluRdtase_N_sf"/>
</dbReference>
<dbReference type="InterPro" id="IPR036291">
    <property type="entry name" value="NAD(P)-bd_dom_sf"/>
</dbReference>
<dbReference type="InterPro" id="IPR006151">
    <property type="entry name" value="Shikm_DH/Glu-tRNA_Rdtase"/>
</dbReference>
<dbReference type="NCBIfam" id="TIGR01035">
    <property type="entry name" value="hemA"/>
    <property type="match status" value="1"/>
</dbReference>
<dbReference type="PANTHER" id="PTHR43013">
    <property type="entry name" value="GLUTAMYL-TRNA REDUCTASE"/>
    <property type="match status" value="1"/>
</dbReference>
<dbReference type="PANTHER" id="PTHR43013:SF1">
    <property type="entry name" value="GLUTAMYL-TRNA REDUCTASE"/>
    <property type="match status" value="1"/>
</dbReference>
<dbReference type="Pfam" id="PF00745">
    <property type="entry name" value="GlutR_dimer"/>
    <property type="match status" value="1"/>
</dbReference>
<dbReference type="Pfam" id="PF05201">
    <property type="entry name" value="GlutR_N"/>
    <property type="match status" value="1"/>
</dbReference>
<dbReference type="Pfam" id="PF01488">
    <property type="entry name" value="Shikimate_DH"/>
    <property type="match status" value="1"/>
</dbReference>
<dbReference type="PIRSF" id="PIRSF000445">
    <property type="entry name" value="4pyrrol_synth_GluRdtase"/>
    <property type="match status" value="1"/>
</dbReference>
<dbReference type="SUPFAM" id="SSF69742">
    <property type="entry name" value="Glutamyl tRNA-reductase catalytic, N-terminal domain"/>
    <property type="match status" value="1"/>
</dbReference>
<dbReference type="SUPFAM" id="SSF69075">
    <property type="entry name" value="Glutamyl tRNA-reductase dimerization domain"/>
    <property type="match status" value="1"/>
</dbReference>
<dbReference type="SUPFAM" id="SSF51735">
    <property type="entry name" value="NAD(P)-binding Rossmann-fold domains"/>
    <property type="match status" value="1"/>
</dbReference>
<dbReference type="PROSITE" id="PS00747">
    <property type="entry name" value="GLUTR"/>
    <property type="match status" value="1"/>
</dbReference>
<organism>
    <name type="scientific">Salmonella dublin (strain CT_02021853)</name>
    <dbReference type="NCBI Taxonomy" id="439851"/>
    <lineage>
        <taxon>Bacteria</taxon>
        <taxon>Pseudomonadati</taxon>
        <taxon>Pseudomonadota</taxon>
        <taxon>Gammaproteobacteria</taxon>
        <taxon>Enterobacterales</taxon>
        <taxon>Enterobacteriaceae</taxon>
        <taxon>Salmonella</taxon>
    </lineage>
</organism>
<name>HEM1_SALDC</name>
<protein>
    <recommendedName>
        <fullName evidence="1">Glutamyl-tRNA reductase</fullName>
        <shortName evidence="1">GluTR</shortName>
        <ecNumber evidence="1">1.2.1.70</ecNumber>
    </recommendedName>
</protein>
<reference key="1">
    <citation type="journal article" date="2011" name="J. Bacteriol.">
        <title>Comparative genomics of 28 Salmonella enterica isolates: evidence for CRISPR-mediated adaptive sublineage evolution.</title>
        <authorList>
            <person name="Fricke W.F."/>
            <person name="Mammel M.K."/>
            <person name="McDermott P.F."/>
            <person name="Tartera C."/>
            <person name="White D.G."/>
            <person name="Leclerc J.E."/>
            <person name="Ravel J."/>
            <person name="Cebula T.A."/>
        </authorList>
    </citation>
    <scope>NUCLEOTIDE SEQUENCE [LARGE SCALE GENOMIC DNA]</scope>
    <source>
        <strain>CT_02021853</strain>
    </source>
</reference>
<feature type="chain" id="PRO_1000093162" description="Glutamyl-tRNA reductase">
    <location>
        <begin position="1"/>
        <end position="418"/>
    </location>
</feature>
<feature type="active site" description="Nucleophile" evidence="1">
    <location>
        <position position="50"/>
    </location>
</feature>
<feature type="binding site" evidence="1">
    <location>
        <begin position="49"/>
        <end position="52"/>
    </location>
    <ligand>
        <name>substrate</name>
    </ligand>
</feature>
<feature type="binding site" evidence="1">
    <location>
        <position position="109"/>
    </location>
    <ligand>
        <name>substrate</name>
    </ligand>
</feature>
<feature type="binding site" evidence="1">
    <location>
        <begin position="114"/>
        <end position="116"/>
    </location>
    <ligand>
        <name>substrate</name>
    </ligand>
</feature>
<feature type="binding site" evidence="1">
    <location>
        <position position="120"/>
    </location>
    <ligand>
        <name>substrate</name>
    </ligand>
</feature>
<feature type="binding site" evidence="1">
    <location>
        <begin position="189"/>
        <end position="194"/>
    </location>
    <ligand>
        <name>NADP(+)</name>
        <dbReference type="ChEBI" id="CHEBI:58349"/>
    </ligand>
</feature>
<feature type="site" description="Important for activity" evidence="1">
    <location>
        <position position="99"/>
    </location>
</feature>
<comment type="function">
    <text evidence="1">Catalyzes the NADPH-dependent reduction of glutamyl-tRNA(Glu) to glutamate 1-semialdehyde (GSA).</text>
</comment>
<comment type="catalytic activity">
    <reaction evidence="1">
        <text>(S)-4-amino-5-oxopentanoate + tRNA(Glu) + NADP(+) = L-glutamyl-tRNA(Glu) + NADPH + H(+)</text>
        <dbReference type="Rhea" id="RHEA:12344"/>
        <dbReference type="Rhea" id="RHEA-COMP:9663"/>
        <dbReference type="Rhea" id="RHEA-COMP:9680"/>
        <dbReference type="ChEBI" id="CHEBI:15378"/>
        <dbReference type="ChEBI" id="CHEBI:57501"/>
        <dbReference type="ChEBI" id="CHEBI:57783"/>
        <dbReference type="ChEBI" id="CHEBI:58349"/>
        <dbReference type="ChEBI" id="CHEBI:78442"/>
        <dbReference type="ChEBI" id="CHEBI:78520"/>
        <dbReference type="EC" id="1.2.1.70"/>
    </reaction>
</comment>
<comment type="pathway">
    <text evidence="1">Porphyrin-containing compound metabolism; protoporphyrin-IX biosynthesis; 5-aminolevulinate from L-glutamyl-tRNA(Glu): step 1/2.</text>
</comment>
<comment type="subunit">
    <text evidence="1">Homodimer.</text>
</comment>
<comment type="domain">
    <text evidence="1">Possesses an unusual extended V-shaped dimeric structure with each monomer consisting of three distinct domains arranged along a curved 'spinal' alpha-helix. The N-terminal catalytic domain specifically recognizes the glutamate moiety of the substrate. The second domain is the NADPH-binding domain, and the third C-terminal domain is responsible for dimerization.</text>
</comment>
<comment type="miscellaneous">
    <text evidence="1">During catalysis, the active site Cys acts as a nucleophile attacking the alpha-carbonyl group of tRNA-bound glutamate with the formation of a thioester intermediate between enzyme and glutamate, and the concomitant release of tRNA(Glu). The thioester intermediate is finally reduced by direct hydride transfer from NADPH, to form the product GSA.</text>
</comment>
<comment type="similarity">
    <text evidence="1">Belongs to the glutamyl-tRNA reductase family.</text>
</comment>
<keyword id="KW-0521">NADP</keyword>
<keyword id="KW-0560">Oxidoreductase</keyword>
<keyword id="KW-0627">Porphyrin biosynthesis</keyword>